<accession>C4L1B9</accession>
<dbReference type="EC" id="2.5.1.75" evidence="1"/>
<dbReference type="EMBL" id="CP001615">
    <property type="protein sequence ID" value="ACQ69065.1"/>
    <property type="molecule type" value="Genomic_DNA"/>
</dbReference>
<dbReference type="RefSeq" id="WP_012726184.1">
    <property type="nucleotide sequence ID" value="NC_012673.1"/>
</dbReference>
<dbReference type="SMR" id="C4L1B9"/>
<dbReference type="STRING" id="360911.EAT1b_0131"/>
<dbReference type="KEGG" id="eat:EAT1b_0131"/>
<dbReference type="eggNOG" id="COG0324">
    <property type="taxonomic scope" value="Bacteria"/>
</dbReference>
<dbReference type="HOGENOM" id="CLU_032616_0_1_9"/>
<dbReference type="OrthoDB" id="9776390at2"/>
<dbReference type="Proteomes" id="UP000000716">
    <property type="component" value="Chromosome"/>
</dbReference>
<dbReference type="GO" id="GO:0005524">
    <property type="term" value="F:ATP binding"/>
    <property type="evidence" value="ECO:0007669"/>
    <property type="project" value="UniProtKB-UniRule"/>
</dbReference>
<dbReference type="GO" id="GO:0052381">
    <property type="term" value="F:tRNA dimethylallyltransferase activity"/>
    <property type="evidence" value="ECO:0007669"/>
    <property type="project" value="UniProtKB-UniRule"/>
</dbReference>
<dbReference type="GO" id="GO:0006400">
    <property type="term" value="P:tRNA modification"/>
    <property type="evidence" value="ECO:0007669"/>
    <property type="project" value="TreeGrafter"/>
</dbReference>
<dbReference type="Gene3D" id="1.10.20.140">
    <property type="match status" value="1"/>
</dbReference>
<dbReference type="Gene3D" id="3.40.50.300">
    <property type="entry name" value="P-loop containing nucleotide triphosphate hydrolases"/>
    <property type="match status" value="1"/>
</dbReference>
<dbReference type="HAMAP" id="MF_00185">
    <property type="entry name" value="IPP_trans"/>
    <property type="match status" value="1"/>
</dbReference>
<dbReference type="InterPro" id="IPR039657">
    <property type="entry name" value="Dimethylallyltransferase"/>
</dbReference>
<dbReference type="InterPro" id="IPR018022">
    <property type="entry name" value="IPT"/>
</dbReference>
<dbReference type="InterPro" id="IPR027417">
    <property type="entry name" value="P-loop_NTPase"/>
</dbReference>
<dbReference type="NCBIfam" id="TIGR00174">
    <property type="entry name" value="miaA"/>
    <property type="match status" value="1"/>
</dbReference>
<dbReference type="PANTHER" id="PTHR11088">
    <property type="entry name" value="TRNA DIMETHYLALLYLTRANSFERASE"/>
    <property type="match status" value="1"/>
</dbReference>
<dbReference type="PANTHER" id="PTHR11088:SF60">
    <property type="entry name" value="TRNA DIMETHYLALLYLTRANSFERASE"/>
    <property type="match status" value="1"/>
</dbReference>
<dbReference type="Pfam" id="PF01715">
    <property type="entry name" value="IPPT"/>
    <property type="match status" value="1"/>
</dbReference>
<dbReference type="SUPFAM" id="SSF52540">
    <property type="entry name" value="P-loop containing nucleoside triphosphate hydrolases"/>
    <property type="match status" value="1"/>
</dbReference>
<proteinExistence type="inferred from homology"/>
<sequence>MKKTPVVVIVGPTAVGKTKTGIELAKAFDGEIVSGDSVQVYRGMDIGSAKVTKEEAEGIPHHLIDICDPDDAMSVAMFQQLARAAIDDIYARGKLPIIVGGTGLYIRSILYDYEFVERPVDEALREELERLAEVEGREALHQRLVQLDPERAATIHPNNVRRVVRALEVAMQGDTQTTDSAPSEHYDYRLFVLHADREILYDRINQRVDAMMEAGLVEEVERLLAQGYRDTQAMRAIGYKEIIPYVEGKISKDRATDLLKQHTRQFAKRQLTWFRHQFDGIWVDMGRKSFELSYKNIYDDVEGFFRKFRLF</sequence>
<gene>
    <name evidence="1" type="primary">miaA</name>
    <name type="ordered locus">EAT1b_0131</name>
</gene>
<comment type="function">
    <text evidence="1">Catalyzes the transfer of a dimethylallyl group onto the adenine at position 37 in tRNAs that read codons beginning with uridine, leading to the formation of N6-(dimethylallyl)adenosine (i(6)A).</text>
</comment>
<comment type="catalytic activity">
    <reaction evidence="1">
        <text>adenosine(37) in tRNA + dimethylallyl diphosphate = N(6)-dimethylallyladenosine(37) in tRNA + diphosphate</text>
        <dbReference type="Rhea" id="RHEA:26482"/>
        <dbReference type="Rhea" id="RHEA-COMP:10162"/>
        <dbReference type="Rhea" id="RHEA-COMP:10375"/>
        <dbReference type="ChEBI" id="CHEBI:33019"/>
        <dbReference type="ChEBI" id="CHEBI:57623"/>
        <dbReference type="ChEBI" id="CHEBI:74411"/>
        <dbReference type="ChEBI" id="CHEBI:74415"/>
        <dbReference type="EC" id="2.5.1.75"/>
    </reaction>
</comment>
<comment type="cofactor">
    <cofactor evidence="1">
        <name>Mg(2+)</name>
        <dbReference type="ChEBI" id="CHEBI:18420"/>
    </cofactor>
</comment>
<comment type="subunit">
    <text evidence="1">Monomer.</text>
</comment>
<comment type="similarity">
    <text evidence="1">Belongs to the IPP transferase family.</text>
</comment>
<keyword id="KW-0067">ATP-binding</keyword>
<keyword id="KW-0460">Magnesium</keyword>
<keyword id="KW-0547">Nucleotide-binding</keyword>
<keyword id="KW-0808">Transferase</keyword>
<keyword id="KW-0819">tRNA processing</keyword>
<feature type="chain" id="PRO_1000203937" description="tRNA dimethylallyltransferase">
    <location>
        <begin position="1"/>
        <end position="311"/>
    </location>
</feature>
<feature type="region of interest" description="Interaction with substrate tRNA" evidence="1">
    <location>
        <begin position="36"/>
        <end position="39"/>
    </location>
</feature>
<feature type="binding site" evidence="1">
    <location>
        <begin position="11"/>
        <end position="18"/>
    </location>
    <ligand>
        <name>ATP</name>
        <dbReference type="ChEBI" id="CHEBI:30616"/>
    </ligand>
</feature>
<feature type="binding site" evidence="1">
    <location>
        <begin position="13"/>
        <end position="18"/>
    </location>
    <ligand>
        <name>substrate</name>
    </ligand>
</feature>
<feature type="site" description="Interaction with substrate tRNA" evidence="1">
    <location>
        <position position="102"/>
    </location>
</feature>
<feature type="site" description="Interaction with substrate tRNA" evidence="1">
    <location>
        <position position="125"/>
    </location>
</feature>
<protein>
    <recommendedName>
        <fullName evidence="1">tRNA dimethylallyltransferase</fullName>
        <ecNumber evidence="1">2.5.1.75</ecNumber>
    </recommendedName>
    <alternativeName>
        <fullName evidence="1">Dimethylallyl diphosphate:tRNA dimethylallyltransferase</fullName>
        <shortName evidence="1">DMAPP:tRNA dimethylallyltransferase</shortName>
        <shortName evidence="1">DMATase</shortName>
    </alternativeName>
    <alternativeName>
        <fullName evidence="1">Isopentenyl-diphosphate:tRNA isopentenyltransferase</fullName>
        <shortName evidence="1">IPP transferase</shortName>
        <shortName evidence="1">IPPT</shortName>
        <shortName evidence="1">IPTase</shortName>
    </alternativeName>
</protein>
<evidence type="ECO:0000255" key="1">
    <source>
        <dbReference type="HAMAP-Rule" id="MF_00185"/>
    </source>
</evidence>
<reference key="1">
    <citation type="journal article" date="2011" name="J. Bacteriol.">
        <title>Complete genome sequence of the Thermophilic Bacterium Exiguobacterium sp. AT1b.</title>
        <authorList>
            <person name="Vishnivetskaya T.A."/>
            <person name="Lucas S."/>
            <person name="Copeland A."/>
            <person name="Lapidus A."/>
            <person name="Glavina del Rio T."/>
            <person name="Dalin E."/>
            <person name="Tice H."/>
            <person name="Bruce D.C."/>
            <person name="Goodwin L.A."/>
            <person name="Pitluck S."/>
            <person name="Saunders E."/>
            <person name="Brettin T."/>
            <person name="Detter C."/>
            <person name="Han C."/>
            <person name="Larimer F."/>
            <person name="Land M.L."/>
            <person name="Hauser L.J."/>
            <person name="Kyrpides N.C."/>
            <person name="Ovchinnikova G."/>
            <person name="Kathariou S."/>
            <person name="Ramaley R.F."/>
            <person name="Rodrigues D.F."/>
            <person name="Hendrix C."/>
            <person name="Richardson P."/>
            <person name="Tiedje J.M."/>
        </authorList>
    </citation>
    <scope>NUCLEOTIDE SEQUENCE [LARGE SCALE GENOMIC DNA]</scope>
    <source>
        <strain>ATCC BAA-1283 / AT1b</strain>
    </source>
</reference>
<organism>
    <name type="scientific">Exiguobacterium sp. (strain ATCC BAA-1283 / AT1b)</name>
    <dbReference type="NCBI Taxonomy" id="360911"/>
    <lineage>
        <taxon>Bacteria</taxon>
        <taxon>Bacillati</taxon>
        <taxon>Bacillota</taxon>
        <taxon>Bacilli</taxon>
        <taxon>Bacillales</taxon>
        <taxon>Bacillales Family XII. Incertae Sedis</taxon>
        <taxon>Exiguobacterium</taxon>
    </lineage>
</organism>
<name>MIAA_EXISA</name>